<feature type="chain" id="PRO_0000052479" description="Globin">
    <location>
        <begin position="1"/>
        <end position="146"/>
    </location>
</feature>
<feature type="domain" description="Globin" evidence="1">
    <location>
        <begin position="1"/>
        <end position="146"/>
    </location>
</feature>
<feature type="binding site" description="proximal binding residue" evidence="1">
    <location>
        <position position="95"/>
    </location>
    <ligand>
        <name>heme b</name>
        <dbReference type="ChEBI" id="CHEBI:60344"/>
    </ligand>
    <ligandPart>
        <name>Fe</name>
        <dbReference type="ChEBI" id="CHEBI:18248"/>
    </ligandPart>
</feature>
<feature type="modified residue" description="N-acetylalanine" evidence="2">
    <location>
        <position position="1"/>
    </location>
</feature>
<keyword id="KW-0007">Acetylation</keyword>
<keyword id="KW-0903">Direct protein sequencing</keyword>
<keyword id="KW-0349">Heme</keyword>
<keyword id="KW-0408">Iron</keyword>
<keyword id="KW-0479">Metal-binding</keyword>
<keyword id="KW-0514">Muscle protein</keyword>
<keyword id="KW-0561">Oxygen transport</keyword>
<keyword id="KW-0813">Transport</keyword>
<sequence length="146" mass="15319">ALSAAEAEVVAKSWGPVFANKDANGDNFLIALFEAYPDSPNFFADFKGKSIADIRASPKLRNVSSRIVSRLNEFVSSAADAGKMAAMLDQFSKEHAGFGVGSQQFQNVSAMFPGFVASIAAPPAGADAAWGKLFGLIIDAMKKAGK</sequence>
<proteinExistence type="evidence at protein level"/>
<name>GLB_DOLAU</name>
<comment type="subunit">
    <text>Monomer.</text>
</comment>
<comment type="miscellaneous">
    <text>This molluscan globin lacks one of the heme-binding histidine residues found in most other globins.</text>
</comment>
<comment type="similarity">
    <text evidence="1">Belongs to the globin family.</text>
</comment>
<dbReference type="PIR" id="A25331">
    <property type="entry name" value="GGGDA"/>
</dbReference>
<dbReference type="SMR" id="P09965"/>
<dbReference type="iPTMnet" id="P09965"/>
<dbReference type="GO" id="GO:0005576">
    <property type="term" value="C:extracellular region"/>
    <property type="evidence" value="ECO:0007669"/>
    <property type="project" value="InterPro"/>
</dbReference>
<dbReference type="GO" id="GO:0005833">
    <property type="term" value="C:hemoglobin complex"/>
    <property type="evidence" value="ECO:0007669"/>
    <property type="project" value="InterPro"/>
</dbReference>
<dbReference type="GO" id="GO:0020037">
    <property type="term" value="F:heme binding"/>
    <property type="evidence" value="ECO:0007669"/>
    <property type="project" value="InterPro"/>
</dbReference>
<dbReference type="GO" id="GO:0005506">
    <property type="term" value="F:iron ion binding"/>
    <property type="evidence" value="ECO:0007669"/>
    <property type="project" value="InterPro"/>
</dbReference>
<dbReference type="GO" id="GO:0016491">
    <property type="term" value="F:oxidoreductase activity"/>
    <property type="evidence" value="ECO:0007669"/>
    <property type="project" value="TreeGrafter"/>
</dbReference>
<dbReference type="GO" id="GO:0019825">
    <property type="term" value="F:oxygen binding"/>
    <property type="evidence" value="ECO:0007669"/>
    <property type="project" value="InterPro"/>
</dbReference>
<dbReference type="GO" id="GO:0005344">
    <property type="term" value="F:oxygen carrier activity"/>
    <property type="evidence" value="ECO:0007669"/>
    <property type="project" value="UniProtKB-KW"/>
</dbReference>
<dbReference type="CDD" id="cd01040">
    <property type="entry name" value="Mb-like"/>
    <property type="match status" value="1"/>
</dbReference>
<dbReference type="Gene3D" id="1.10.490.10">
    <property type="entry name" value="Globins"/>
    <property type="match status" value="1"/>
</dbReference>
<dbReference type="InterPro" id="IPR002336">
    <property type="entry name" value="Erythrocruorin"/>
</dbReference>
<dbReference type="InterPro" id="IPR000971">
    <property type="entry name" value="Globin"/>
</dbReference>
<dbReference type="InterPro" id="IPR009050">
    <property type="entry name" value="Globin-like_sf"/>
</dbReference>
<dbReference type="InterPro" id="IPR012292">
    <property type="entry name" value="Globin/Proto"/>
</dbReference>
<dbReference type="InterPro" id="IPR013314">
    <property type="entry name" value="Globin_lamprey/hagfish"/>
</dbReference>
<dbReference type="InterPro" id="IPR044399">
    <property type="entry name" value="Mb-like_M"/>
</dbReference>
<dbReference type="PANTHER" id="PTHR46783">
    <property type="entry name" value="CYTOGLOBIN"/>
    <property type="match status" value="1"/>
</dbReference>
<dbReference type="PANTHER" id="PTHR46783:SF3">
    <property type="entry name" value="GLOBIN FAMILY PROFILE DOMAIN-CONTAINING PROTEIN"/>
    <property type="match status" value="1"/>
</dbReference>
<dbReference type="Pfam" id="PF00042">
    <property type="entry name" value="Globin"/>
    <property type="match status" value="1"/>
</dbReference>
<dbReference type="PRINTS" id="PR00611">
    <property type="entry name" value="ERYTHCRUORIN"/>
</dbReference>
<dbReference type="SUPFAM" id="SSF46458">
    <property type="entry name" value="Globin-like"/>
    <property type="match status" value="1"/>
</dbReference>
<dbReference type="PROSITE" id="PS01033">
    <property type="entry name" value="GLOBIN"/>
    <property type="match status" value="1"/>
</dbReference>
<protein>
    <recommendedName>
        <fullName>Globin</fullName>
    </recommendedName>
    <alternativeName>
        <fullName>Myoglobin</fullName>
    </alternativeName>
</protein>
<accession>P09965</accession>
<evidence type="ECO:0000255" key="1">
    <source>
        <dbReference type="PROSITE-ProRule" id="PRU00238"/>
    </source>
</evidence>
<evidence type="ECO:0000269" key="2">
    <source>
    </source>
</evidence>
<organism>
    <name type="scientific">Dolabella auricularia</name>
    <name type="common">Shoulderblade sea cat</name>
    <dbReference type="NCBI Taxonomy" id="6511"/>
    <lineage>
        <taxon>Eukaryota</taxon>
        <taxon>Metazoa</taxon>
        <taxon>Spiralia</taxon>
        <taxon>Lophotrochozoa</taxon>
        <taxon>Mollusca</taxon>
        <taxon>Gastropoda</taxon>
        <taxon>Heterobranchia</taxon>
        <taxon>Euthyneura</taxon>
        <taxon>Tectipleura</taxon>
        <taxon>Aplysiida</taxon>
        <taxon>Aplysioidea</taxon>
        <taxon>Aplysiidae</taxon>
        <taxon>Dolabella</taxon>
    </lineage>
</organism>
<reference key="1">
    <citation type="journal article" date="1986" name="J. Biol. Chem.">
        <title>Amino acid sequence of myoglobin from the mollusc Dolabella auricularia.</title>
        <authorList>
            <person name="Suzuki T."/>
        </authorList>
    </citation>
    <scope>PROTEIN SEQUENCE</scope>
    <scope>ACETYLATION AT ALA-1</scope>
</reference>